<protein>
    <recommendedName>
        <fullName evidence="1">Protein translocase subunit SecA</fullName>
        <ecNumber evidence="1">7.4.2.8</ecNumber>
    </recommendedName>
</protein>
<reference key="1">
    <citation type="journal article" date="2009" name="PLoS Pathog.">
        <title>Genomic evidence for the evolution of Streptococcus equi: host restriction, increased virulence, and genetic exchange with human pathogens.</title>
        <authorList>
            <person name="Holden M.T.G."/>
            <person name="Heather Z."/>
            <person name="Paillot R."/>
            <person name="Steward K.F."/>
            <person name="Webb K."/>
            <person name="Ainslie F."/>
            <person name="Jourdan T."/>
            <person name="Bason N.C."/>
            <person name="Holroyd N.E."/>
            <person name="Mungall K."/>
            <person name="Quail M.A."/>
            <person name="Sanders M."/>
            <person name="Simmonds M."/>
            <person name="Willey D."/>
            <person name="Brooks K."/>
            <person name="Aanensen D.M."/>
            <person name="Spratt B.G."/>
            <person name="Jolley K.A."/>
            <person name="Maiden M.C.J."/>
            <person name="Kehoe M."/>
            <person name="Chanter N."/>
            <person name="Bentley S.D."/>
            <person name="Robinson C."/>
            <person name="Maskell D.J."/>
            <person name="Parkhill J."/>
            <person name="Waller A.S."/>
        </authorList>
    </citation>
    <scope>NUCLEOTIDE SEQUENCE [LARGE SCALE GENOMIC DNA]</scope>
    <source>
        <strain>H70</strain>
    </source>
</reference>
<evidence type="ECO:0000255" key="1">
    <source>
        <dbReference type="HAMAP-Rule" id="MF_01382"/>
    </source>
</evidence>
<comment type="function">
    <text evidence="1">Part of the Sec protein translocase complex. Interacts with the SecYEG preprotein conducting channel. Has a central role in coupling the hydrolysis of ATP to the transfer of proteins into and across the cell membrane, serving as an ATP-driven molecular motor driving the stepwise translocation of polypeptide chains across the membrane.</text>
</comment>
<comment type="catalytic activity">
    <reaction evidence="1">
        <text>ATP + H2O + cellular proteinSide 1 = ADP + phosphate + cellular proteinSide 2.</text>
        <dbReference type="EC" id="7.4.2.8"/>
    </reaction>
</comment>
<comment type="cofactor">
    <cofactor evidence="1">
        <name>Zn(2+)</name>
        <dbReference type="ChEBI" id="CHEBI:29105"/>
    </cofactor>
    <text evidence="1">May bind 1 zinc ion per subunit.</text>
</comment>
<comment type="subunit">
    <text evidence="1">Monomer and homodimer. Part of the essential Sec protein translocation apparatus which comprises SecA, SecYEG and auxiliary proteins SecDF. Other proteins may also be involved.</text>
</comment>
<comment type="subcellular location">
    <subcellularLocation>
        <location evidence="1">Cell membrane</location>
        <topology evidence="1">Peripheral membrane protein</topology>
        <orientation evidence="1">Cytoplasmic side</orientation>
    </subcellularLocation>
    <subcellularLocation>
        <location evidence="1">Cytoplasm</location>
    </subcellularLocation>
    <text evidence="1">Distribution is 50-50.</text>
</comment>
<comment type="similarity">
    <text evidence="1">Belongs to the SecA family.</text>
</comment>
<sequence>MSNILRKVIENDKGELRKLEKIAKKVESYADYMESLSDKDLQAKTPEFKQRYQNGETLEQLLPEAFAVVREAARRVLGLYPYRVQIMGGIVLHNGDVPEMRTGEGKTLTATMPVYLNALAGEGVHVITVNEYLSTRDATEMGEVYSWLGLSVGINLAAKSPAEKREAYLCDITYSTNSEVGFDYLRDNMVVRQEDMVQRPLNFALVDEVDSVLIDEARTPLIVSGAVSSETNQLYIRADMFVKTLDSVDYIIDVPTKTIGLSDSGIDKAESYFNLSNLYDIENVALTHFVDNALRANYIMLLDIDYVVSEEGEILIVDQFTGRTMEGRRFSDGLHQAIEAKEGVRIQEESKTSASITYQNMFRMYKKLAGMTGTAKTEEEEFREVYNMRIIPIPTNRPIARIDHTDLLYATLNSKFKAVVADVKARYEKGQPVLVGTVAVETSDLISKKLVEAGIPHEVLNAKNHFKEAQIIMNAGQRGAVTIATNMAGRGTDIKLGEGVRELGGLCVIGTERHESRRIDNQLRGRSGRQGDPGESQFYLSLEDELMRRFGTDRIKAFLDRMNNDDEDIVIKSRMLSRQVESAQKRVEGNNYDTRKQVLQYDDVMREQREIIYANRRDVITANRDLGPEIKAMIKRTIDRAVDAHSRTNRKDAIDAIVTFARTSIVPEETIGAKELRGLKDDQIKDKLYQRALEIYDKQLSKLRDQDAILEFQKVLILMIVDNKWTEHIDALDQLRNAVGLRGYAQNNPVVEYQSEGFKMFQDMIGAIEFDVTRTMMKAQIHEQERERATQYATTTAAQNIQSQAIGDDFDSSADFSRVERNDACPCHSGKKFKNCHGRKAF</sequence>
<gene>
    <name evidence="1" type="primary">secA</name>
    <name type="ordered locus">SZO_16110</name>
</gene>
<organism>
    <name type="scientific">Streptococcus equi subsp. zooepidemicus (strain H70)</name>
    <dbReference type="NCBI Taxonomy" id="553483"/>
    <lineage>
        <taxon>Bacteria</taxon>
        <taxon>Bacillati</taxon>
        <taxon>Bacillota</taxon>
        <taxon>Bacilli</taxon>
        <taxon>Lactobacillales</taxon>
        <taxon>Streptococcaceae</taxon>
        <taxon>Streptococcus</taxon>
    </lineage>
</organism>
<accession>C0MEB9</accession>
<feature type="chain" id="PRO_1000215119" description="Protein translocase subunit SecA">
    <location>
        <begin position="1"/>
        <end position="842"/>
    </location>
</feature>
<feature type="binding site" evidence="1">
    <location>
        <position position="85"/>
    </location>
    <ligand>
        <name>ATP</name>
        <dbReference type="ChEBI" id="CHEBI:30616"/>
    </ligand>
</feature>
<feature type="binding site" evidence="1">
    <location>
        <begin position="103"/>
        <end position="107"/>
    </location>
    <ligand>
        <name>ATP</name>
        <dbReference type="ChEBI" id="CHEBI:30616"/>
    </ligand>
</feature>
<feature type="binding site" evidence="1">
    <location>
        <position position="493"/>
    </location>
    <ligand>
        <name>ATP</name>
        <dbReference type="ChEBI" id="CHEBI:30616"/>
    </ligand>
</feature>
<feature type="binding site" evidence="1">
    <location>
        <position position="825"/>
    </location>
    <ligand>
        <name>Zn(2+)</name>
        <dbReference type="ChEBI" id="CHEBI:29105"/>
    </ligand>
</feature>
<feature type="binding site" evidence="1">
    <location>
        <position position="827"/>
    </location>
    <ligand>
        <name>Zn(2+)</name>
        <dbReference type="ChEBI" id="CHEBI:29105"/>
    </ligand>
</feature>
<feature type="binding site" evidence="1">
    <location>
        <position position="836"/>
    </location>
    <ligand>
        <name>Zn(2+)</name>
        <dbReference type="ChEBI" id="CHEBI:29105"/>
    </ligand>
</feature>
<feature type="binding site" evidence="1">
    <location>
        <position position="837"/>
    </location>
    <ligand>
        <name>Zn(2+)</name>
        <dbReference type="ChEBI" id="CHEBI:29105"/>
    </ligand>
</feature>
<keyword id="KW-0067">ATP-binding</keyword>
<keyword id="KW-1003">Cell membrane</keyword>
<keyword id="KW-0963">Cytoplasm</keyword>
<keyword id="KW-0472">Membrane</keyword>
<keyword id="KW-0479">Metal-binding</keyword>
<keyword id="KW-0547">Nucleotide-binding</keyword>
<keyword id="KW-0653">Protein transport</keyword>
<keyword id="KW-1278">Translocase</keyword>
<keyword id="KW-0811">Translocation</keyword>
<keyword id="KW-0813">Transport</keyword>
<keyword id="KW-0862">Zinc</keyword>
<dbReference type="EC" id="7.4.2.8" evidence="1"/>
<dbReference type="EMBL" id="FM204884">
    <property type="protein sequence ID" value="CAX00345.1"/>
    <property type="molecule type" value="Genomic_DNA"/>
</dbReference>
<dbReference type="SMR" id="C0MEB9"/>
<dbReference type="KEGG" id="seq:SZO_16110"/>
<dbReference type="eggNOG" id="COG0653">
    <property type="taxonomic scope" value="Bacteria"/>
</dbReference>
<dbReference type="HOGENOM" id="CLU_005314_3_0_9"/>
<dbReference type="Proteomes" id="UP000001368">
    <property type="component" value="Chromosome"/>
</dbReference>
<dbReference type="GO" id="GO:0031522">
    <property type="term" value="C:cell envelope Sec protein transport complex"/>
    <property type="evidence" value="ECO:0007669"/>
    <property type="project" value="TreeGrafter"/>
</dbReference>
<dbReference type="GO" id="GO:0005829">
    <property type="term" value="C:cytosol"/>
    <property type="evidence" value="ECO:0007669"/>
    <property type="project" value="TreeGrafter"/>
</dbReference>
<dbReference type="GO" id="GO:0005886">
    <property type="term" value="C:plasma membrane"/>
    <property type="evidence" value="ECO:0007669"/>
    <property type="project" value="UniProtKB-SubCell"/>
</dbReference>
<dbReference type="GO" id="GO:0005524">
    <property type="term" value="F:ATP binding"/>
    <property type="evidence" value="ECO:0007669"/>
    <property type="project" value="UniProtKB-UniRule"/>
</dbReference>
<dbReference type="GO" id="GO:0046872">
    <property type="term" value="F:metal ion binding"/>
    <property type="evidence" value="ECO:0007669"/>
    <property type="project" value="UniProtKB-KW"/>
</dbReference>
<dbReference type="GO" id="GO:0008564">
    <property type="term" value="F:protein-exporting ATPase activity"/>
    <property type="evidence" value="ECO:0007669"/>
    <property type="project" value="UniProtKB-EC"/>
</dbReference>
<dbReference type="GO" id="GO:0065002">
    <property type="term" value="P:intracellular protein transmembrane transport"/>
    <property type="evidence" value="ECO:0007669"/>
    <property type="project" value="UniProtKB-UniRule"/>
</dbReference>
<dbReference type="GO" id="GO:0017038">
    <property type="term" value="P:protein import"/>
    <property type="evidence" value="ECO:0007669"/>
    <property type="project" value="InterPro"/>
</dbReference>
<dbReference type="GO" id="GO:0006605">
    <property type="term" value="P:protein targeting"/>
    <property type="evidence" value="ECO:0007669"/>
    <property type="project" value="UniProtKB-UniRule"/>
</dbReference>
<dbReference type="GO" id="GO:0043952">
    <property type="term" value="P:protein transport by the Sec complex"/>
    <property type="evidence" value="ECO:0007669"/>
    <property type="project" value="TreeGrafter"/>
</dbReference>
<dbReference type="CDD" id="cd17928">
    <property type="entry name" value="DEXDc_SecA"/>
    <property type="match status" value="1"/>
</dbReference>
<dbReference type="CDD" id="cd18803">
    <property type="entry name" value="SF2_C_secA"/>
    <property type="match status" value="1"/>
</dbReference>
<dbReference type="FunFam" id="1.10.3060.10:FF:000002">
    <property type="entry name" value="Preprotein translocase subunit SecA"/>
    <property type="match status" value="1"/>
</dbReference>
<dbReference type="FunFam" id="3.40.50.300:FF:000429">
    <property type="entry name" value="Preprotein translocase subunit SecA"/>
    <property type="match status" value="1"/>
</dbReference>
<dbReference type="FunFam" id="3.90.1440.10:FF:000001">
    <property type="entry name" value="Preprotein translocase subunit SecA"/>
    <property type="match status" value="1"/>
</dbReference>
<dbReference type="Gene3D" id="1.10.3060.10">
    <property type="entry name" value="Helical scaffold and wing domains of SecA"/>
    <property type="match status" value="1"/>
</dbReference>
<dbReference type="Gene3D" id="3.40.50.300">
    <property type="entry name" value="P-loop containing nucleotide triphosphate hydrolases"/>
    <property type="match status" value="3"/>
</dbReference>
<dbReference type="Gene3D" id="3.90.1440.10">
    <property type="entry name" value="SecA, preprotein cross-linking domain"/>
    <property type="match status" value="1"/>
</dbReference>
<dbReference type="HAMAP" id="MF_01382">
    <property type="entry name" value="SecA"/>
    <property type="match status" value="1"/>
</dbReference>
<dbReference type="InterPro" id="IPR014001">
    <property type="entry name" value="Helicase_ATP-bd"/>
</dbReference>
<dbReference type="InterPro" id="IPR001650">
    <property type="entry name" value="Helicase_C-like"/>
</dbReference>
<dbReference type="InterPro" id="IPR027417">
    <property type="entry name" value="P-loop_NTPase"/>
</dbReference>
<dbReference type="InterPro" id="IPR004027">
    <property type="entry name" value="SEC_C_motif"/>
</dbReference>
<dbReference type="InterPro" id="IPR000185">
    <property type="entry name" value="SecA"/>
</dbReference>
<dbReference type="InterPro" id="IPR020937">
    <property type="entry name" value="SecA_CS"/>
</dbReference>
<dbReference type="InterPro" id="IPR011115">
    <property type="entry name" value="SecA_DEAD"/>
</dbReference>
<dbReference type="InterPro" id="IPR014018">
    <property type="entry name" value="SecA_motor_DEAD"/>
</dbReference>
<dbReference type="InterPro" id="IPR011130">
    <property type="entry name" value="SecA_preprotein_X-link_dom"/>
</dbReference>
<dbReference type="InterPro" id="IPR044722">
    <property type="entry name" value="SecA_SF2_C"/>
</dbReference>
<dbReference type="InterPro" id="IPR011116">
    <property type="entry name" value="SecA_Wing/Scaffold"/>
</dbReference>
<dbReference type="InterPro" id="IPR036266">
    <property type="entry name" value="SecA_Wing/Scaffold_sf"/>
</dbReference>
<dbReference type="InterPro" id="IPR036670">
    <property type="entry name" value="SecA_X-link_sf"/>
</dbReference>
<dbReference type="NCBIfam" id="NF006630">
    <property type="entry name" value="PRK09200.1"/>
    <property type="match status" value="1"/>
</dbReference>
<dbReference type="NCBIfam" id="TIGR00963">
    <property type="entry name" value="secA"/>
    <property type="match status" value="1"/>
</dbReference>
<dbReference type="PANTHER" id="PTHR30612:SF0">
    <property type="entry name" value="CHLOROPLAST PROTEIN-TRANSPORTING ATPASE"/>
    <property type="match status" value="1"/>
</dbReference>
<dbReference type="PANTHER" id="PTHR30612">
    <property type="entry name" value="SECA INNER MEMBRANE COMPONENT OF SEC PROTEIN SECRETION SYSTEM"/>
    <property type="match status" value="1"/>
</dbReference>
<dbReference type="Pfam" id="PF21090">
    <property type="entry name" value="P-loop_SecA"/>
    <property type="match status" value="1"/>
</dbReference>
<dbReference type="Pfam" id="PF02810">
    <property type="entry name" value="SEC-C"/>
    <property type="match status" value="1"/>
</dbReference>
<dbReference type="Pfam" id="PF07517">
    <property type="entry name" value="SecA_DEAD"/>
    <property type="match status" value="1"/>
</dbReference>
<dbReference type="Pfam" id="PF01043">
    <property type="entry name" value="SecA_PP_bind"/>
    <property type="match status" value="1"/>
</dbReference>
<dbReference type="Pfam" id="PF07516">
    <property type="entry name" value="SecA_SW"/>
    <property type="match status" value="1"/>
</dbReference>
<dbReference type="PRINTS" id="PR00906">
    <property type="entry name" value="SECA"/>
</dbReference>
<dbReference type="SMART" id="SM00957">
    <property type="entry name" value="SecA_DEAD"/>
    <property type="match status" value="1"/>
</dbReference>
<dbReference type="SMART" id="SM00958">
    <property type="entry name" value="SecA_PP_bind"/>
    <property type="match status" value="1"/>
</dbReference>
<dbReference type="SUPFAM" id="SSF81886">
    <property type="entry name" value="Helical scaffold and wing domains of SecA"/>
    <property type="match status" value="1"/>
</dbReference>
<dbReference type="SUPFAM" id="SSF52540">
    <property type="entry name" value="P-loop containing nucleoside triphosphate hydrolases"/>
    <property type="match status" value="2"/>
</dbReference>
<dbReference type="SUPFAM" id="SSF81767">
    <property type="entry name" value="Pre-protein crosslinking domain of SecA"/>
    <property type="match status" value="1"/>
</dbReference>
<dbReference type="PROSITE" id="PS01312">
    <property type="entry name" value="SECA"/>
    <property type="match status" value="1"/>
</dbReference>
<dbReference type="PROSITE" id="PS51196">
    <property type="entry name" value="SECA_MOTOR_DEAD"/>
    <property type="match status" value="1"/>
</dbReference>
<name>SECA_STRS7</name>
<proteinExistence type="inferred from homology"/>